<dbReference type="EMBL" id="M25374">
    <property type="protein sequence ID" value="AAA43556.1"/>
    <property type="molecule type" value="Genomic_RNA"/>
</dbReference>
<dbReference type="PIR" id="H32662">
    <property type="entry name" value="MNIVB4"/>
</dbReference>
<dbReference type="SMR" id="P13148"/>
<dbReference type="GO" id="GO:0042025">
    <property type="term" value="C:host cell nucleus"/>
    <property type="evidence" value="ECO:0007669"/>
    <property type="project" value="UniProtKB-SubCell"/>
</dbReference>
<dbReference type="GO" id="GO:0044423">
    <property type="term" value="C:virion component"/>
    <property type="evidence" value="ECO:0007669"/>
    <property type="project" value="UniProtKB-UniRule"/>
</dbReference>
<dbReference type="GO" id="GO:0039675">
    <property type="term" value="P:exit of virus from host cell nucleus through nuclear pore"/>
    <property type="evidence" value="ECO:0007669"/>
    <property type="project" value="UniProtKB-UniRule"/>
</dbReference>
<dbReference type="Gene3D" id="1.10.287.230">
    <property type="match status" value="1"/>
</dbReference>
<dbReference type="Gene3D" id="1.10.287.10">
    <property type="entry name" value="S15/NS1, RNA-binding"/>
    <property type="match status" value="1"/>
</dbReference>
<dbReference type="HAMAP" id="MF_04067">
    <property type="entry name" value="INFV_NEP"/>
    <property type="match status" value="1"/>
</dbReference>
<dbReference type="InterPro" id="IPR000968">
    <property type="entry name" value="Flu_NS2"/>
</dbReference>
<dbReference type="Pfam" id="PF00601">
    <property type="entry name" value="Flu_NS2"/>
    <property type="match status" value="1"/>
</dbReference>
<dbReference type="SUPFAM" id="SSF101156">
    <property type="entry name" value="Nonstructural protein ns2, Nep, M1-binding domain"/>
    <property type="match status" value="1"/>
</dbReference>
<name>NEP_I79A1</name>
<organismHost>
    <name type="scientific">Aves</name>
    <dbReference type="NCBI Taxonomy" id="8782"/>
</organismHost>
<organismHost>
    <name type="scientific">Sus scrofa</name>
    <name type="common">Pig</name>
    <dbReference type="NCBI Taxonomy" id="9823"/>
</organismHost>
<proteinExistence type="inferred from homology"/>
<comment type="function">
    <text evidence="1">Mediates the nuclear export of encapsidated genomic RNAs (ribonucleoproteins, RNPs). Acts as an adapter between viral RNPs complexes and the nuclear export machinery of the cell. Possesses no intrinsic RNA-binding activity, but includes a C-terminal M1-binding domain. This domain is believed to allow recognition of RNPs bound to the protein M1. Since protein M1 is not available in large quantities before late stages of infection, such an indirect recognition mechanism probably ensures that genomic RNPs are not exported from the host nucleus until sufficient quantities of viral mRNA and progeny genomic RNA have been synthesized. Furthermore, the RNPs enter the host cytoplasm only when associated with the M1 protein that is necessary to guide them to the plasma membrane. May down-regulate viral RNA synthesis when overproduced.</text>
</comment>
<comment type="subunit">
    <text evidence="1">Interacts with protein M1. May interact with host nucleoporin RAB/HRB and exportin XPO1/CRM1.</text>
</comment>
<comment type="subcellular location">
    <subcellularLocation>
        <location evidence="1">Virion</location>
    </subcellularLocation>
    <subcellularLocation>
        <location evidence="1">Host nucleus</location>
    </subcellularLocation>
</comment>
<comment type="alternative products">
    <event type="alternative splicing"/>
    <isoform>
        <id>P13148-1</id>
        <name>NEP</name>
        <name>NS2</name>
        <sequence type="displayed"/>
    </isoform>
    <isoform>
        <id>P13140-1</id>
        <name>NS1</name>
        <sequence type="external"/>
    </isoform>
</comment>
<comment type="miscellaneous">
    <text>Average number present in a viral particle is estimated to be 130-200 molecules.</text>
</comment>
<comment type="similarity">
    <text evidence="1">Belongs to the influenza viruses NEP family.</text>
</comment>
<sequence length="121" mass="14347">MDSNTVSSFQDILMRMSKMQLGSSSEDLNGMITQFESLKLYRDSLGEAVMRIGDLHSLQNRNGKWREQLSQKFEEIRWLIEEVRHRLKITENSFEQITFMQALQLLLEVEQEIRTFSFQLI</sequence>
<gene>
    <name evidence="1" type="primary">NS</name>
</gene>
<feature type="chain" id="PRO_0000079001" description="Nuclear export protein">
    <location>
        <begin position="1"/>
        <end position="121"/>
    </location>
</feature>
<feature type="short sequence motif" description="Nuclear export signal" evidence="1">
    <location>
        <begin position="12"/>
        <end position="21"/>
    </location>
</feature>
<feature type="short sequence motif" description="Nuclear export signal" evidence="1">
    <location>
        <begin position="85"/>
        <end position="94"/>
    </location>
</feature>
<keyword id="KW-0025">Alternative splicing</keyword>
<keyword id="KW-1048">Host nucleus</keyword>
<keyword id="KW-0945">Host-virus interaction</keyword>
<keyword id="KW-0813">Transport</keyword>
<keyword id="KW-0946">Virion</keyword>
<organism>
    <name type="scientific">Influenza A virus (strain A/Pintail/Alberta/119/1979 H4N6)</name>
    <dbReference type="NCBI Taxonomy" id="384504"/>
    <lineage>
        <taxon>Viruses</taxon>
        <taxon>Riboviria</taxon>
        <taxon>Orthornavirae</taxon>
        <taxon>Negarnaviricota</taxon>
        <taxon>Polyploviricotina</taxon>
        <taxon>Insthoviricetes</taxon>
        <taxon>Articulavirales</taxon>
        <taxon>Orthomyxoviridae</taxon>
        <taxon>Alphainfluenzavirus</taxon>
        <taxon>Alphainfluenzavirus influenzae</taxon>
        <taxon>Influenza A virus</taxon>
    </lineage>
</organism>
<evidence type="ECO:0000255" key="1">
    <source>
        <dbReference type="HAMAP-Rule" id="MF_04067"/>
    </source>
</evidence>
<reference key="1">
    <citation type="journal article" date="1989" name="Virology">
        <title>The B allele of the NS gene of avian influenza viruses, but not the A allele, attenuates a human influenza A virus for squirrel monkeys.</title>
        <authorList>
            <person name="Treanor J.J."/>
            <person name="Snyder M.H."/>
            <person name="London W.T."/>
            <person name="Murphy B.R."/>
        </authorList>
    </citation>
    <scope>NUCLEOTIDE SEQUENCE [GENOMIC RNA]</scope>
</reference>
<accession>P13148</accession>
<protein>
    <recommendedName>
        <fullName evidence="1">Nuclear export protein</fullName>
        <shortName evidence="1">NEP</shortName>
    </recommendedName>
    <alternativeName>
        <fullName evidence="1">Non-structural protein 2</fullName>
        <shortName evidence="1">NS2</shortName>
    </alternativeName>
</protein>